<evidence type="ECO:0000250" key="1">
    <source>
        <dbReference type="UniProtKB" id="Q12375"/>
    </source>
</evidence>
<evidence type="ECO:0000255" key="2"/>
<evidence type="ECO:0000269" key="3">
    <source>
    </source>
</evidence>
<evidence type="ECO:0000305" key="4"/>
<protein>
    <recommendedName>
        <fullName evidence="4">Mitochondrial ornithine transporter 1</fullName>
    </recommendedName>
</protein>
<sequence>MGLPVHNQPHKAHSGSPASTFSAALVSSAISNVIGYPLDSIKVRQQTYNFPTIRSCFQNAVKNEGLKGLYRGLTLPLISATLSRSVSFTVYDSLKLTFAHVDPTLRYFISGLGTGTFISLFACPFEYSKLYSQIDMLLRKTNMGRRQETNSKLSVRPPLSSFQSASDIVRRYGFTALWNGYRYHLTRDALGSACYFTIYETFKKNLIANDVKPHFAYAFSGAFCGALSWILVFPVDTAKSIVQRNTLLSIKTPLSSIPWLSFTIYRGIGISLMRSALINSCNFTLFELFRETKVLSK</sequence>
<comment type="function">
    <text evidence="1">Required for arginine biosynthesis. Transports ornithine synthesized from glutamate in the mitochondrial matrix to the cytosol, where it is converted to arginine.</text>
</comment>
<comment type="subcellular location">
    <subcellularLocation>
        <location evidence="3">Mitochondrion inner membrane</location>
        <topology evidence="3">Multi-pass membrane protein</topology>
    </subcellularLocation>
</comment>
<comment type="similarity">
    <text evidence="4">Belongs to the mitochondrial carrier (TC 2.A.29) family.</text>
</comment>
<organism>
    <name type="scientific">Schizosaccharomyces pombe (strain 972 / ATCC 24843)</name>
    <name type="common">Fission yeast</name>
    <dbReference type="NCBI Taxonomy" id="284812"/>
    <lineage>
        <taxon>Eukaryota</taxon>
        <taxon>Fungi</taxon>
        <taxon>Dikarya</taxon>
        <taxon>Ascomycota</taxon>
        <taxon>Taphrinomycotina</taxon>
        <taxon>Schizosaccharomycetes</taxon>
        <taxon>Schizosaccharomycetales</taxon>
        <taxon>Schizosaccharomycetaceae</taxon>
        <taxon>Schizosaccharomyces</taxon>
    </lineage>
</organism>
<gene>
    <name evidence="4" type="primary">ort1</name>
    <name type="ORF">SPBC29A3.11c</name>
</gene>
<dbReference type="EMBL" id="CU329671">
    <property type="protein sequence ID" value="CAA18388.1"/>
    <property type="molecule type" value="Genomic_DNA"/>
</dbReference>
<dbReference type="PIR" id="T40082">
    <property type="entry name" value="T40082"/>
</dbReference>
<dbReference type="RefSeq" id="NP_595839.1">
    <property type="nucleotide sequence ID" value="NM_001021743.2"/>
</dbReference>
<dbReference type="SMR" id="O59674"/>
<dbReference type="STRING" id="284812.O59674"/>
<dbReference type="PaxDb" id="4896-SPBC29A3.11c.1"/>
<dbReference type="EnsemblFungi" id="SPBC29A3.11c.1">
    <property type="protein sequence ID" value="SPBC29A3.11c.1:pep"/>
    <property type="gene ID" value="SPBC29A3.11c"/>
</dbReference>
<dbReference type="GeneID" id="2540397"/>
<dbReference type="KEGG" id="spo:2540397"/>
<dbReference type="PomBase" id="SPBC29A3.11c">
    <property type="gene designation" value="ort1"/>
</dbReference>
<dbReference type="VEuPathDB" id="FungiDB:SPBC29A3.11c"/>
<dbReference type="eggNOG" id="KOG0758">
    <property type="taxonomic scope" value="Eukaryota"/>
</dbReference>
<dbReference type="HOGENOM" id="CLU_015166_4_0_1"/>
<dbReference type="InParanoid" id="O59674"/>
<dbReference type="OMA" id="NRRMYRG"/>
<dbReference type="PhylomeDB" id="O59674"/>
<dbReference type="Reactome" id="R-SPO-200425">
    <property type="pathway name" value="Carnitine shuttle"/>
</dbReference>
<dbReference type="PRO" id="PR:O59674"/>
<dbReference type="Proteomes" id="UP000002485">
    <property type="component" value="Chromosome II"/>
</dbReference>
<dbReference type="GO" id="GO:0005743">
    <property type="term" value="C:mitochondrial inner membrane"/>
    <property type="evidence" value="ECO:0000250"/>
    <property type="project" value="PomBase"/>
</dbReference>
<dbReference type="GO" id="GO:0005739">
    <property type="term" value="C:mitochondrion"/>
    <property type="evidence" value="ECO:0007005"/>
    <property type="project" value="PomBase"/>
</dbReference>
<dbReference type="GO" id="GO:0000064">
    <property type="term" value="F:L-ornithine transmembrane transporter activity"/>
    <property type="evidence" value="ECO:0000266"/>
    <property type="project" value="PomBase"/>
</dbReference>
<dbReference type="GO" id="GO:0022857">
    <property type="term" value="F:transmembrane transporter activity"/>
    <property type="evidence" value="ECO:0000318"/>
    <property type="project" value="GO_Central"/>
</dbReference>
<dbReference type="GO" id="GO:1990575">
    <property type="term" value="P:mitochondrial L-ornithine transmembrane transport"/>
    <property type="evidence" value="ECO:0000266"/>
    <property type="project" value="PomBase"/>
</dbReference>
<dbReference type="FunFam" id="1.50.40.10:FF:000167">
    <property type="entry name" value="Uncharacterized mitochondrial carrier C29A3.11c"/>
    <property type="match status" value="1"/>
</dbReference>
<dbReference type="Gene3D" id="1.50.40.10">
    <property type="entry name" value="Mitochondrial carrier domain"/>
    <property type="match status" value="1"/>
</dbReference>
<dbReference type="InterPro" id="IPR050567">
    <property type="entry name" value="Mitochondrial_Carrier"/>
</dbReference>
<dbReference type="InterPro" id="IPR018108">
    <property type="entry name" value="Mitochondrial_sb/sol_carrier"/>
</dbReference>
<dbReference type="InterPro" id="IPR023395">
    <property type="entry name" value="Mt_carrier_dom_sf"/>
</dbReference>
<dbReference type="PANTHER" id="PTHR45624:SF9">
    <property type="entry name" value="CARRIER PROTEIN, PUTATIVE (AFU_ORTHOLOGUE AFUA_4G06390)-RELATED"/>
    <property type="match status" value="1"/>
</dbReference>
<dbReference type="PANTHER" id="PTHR45624">
    <property type="entry name" value="MITOCHONDRIAL BASIC AMINO ACIDS TRANSPORTER-RELATED"/>
    <property type="match status" value="1"/>
</dbReference>
<dbReference type="Pfam" id="PF00153">
    <property type="entry name" value="Mito_carr"/>
    <property type="match status" value="2"/>
</dbReference>
<dbReference type="SUPFAM" id="SSF103506">
    <property type="entry name" value="Mitochondrial carrier"/>
    <property type="match status" value="1"/>
</dbReference>
<dbReference type="PROSITE" id="PS50920">
    <property type="entry name" value="SOLCAR"/>
    <property type="match status" value="3"/>
</dbReference>
<proteinExistence type="inferred from homology"/>
<accession>O59674</accession>
<name>ORT1_SCHPO</name>
<reference key="1">
    <citation type="journal article" date="2002" name="Nature">
        <title>The genome sequence of Schizosaccharomyces pombe.</title>
        <authorList>
            <person name="Wood V."/>
            <person name="Gwilliam R."/>
            <person name="Rajandream M.A."/>
            <person name="Lyne M.H."/>
            <person name="Lyne R."/>
            <person name="Stewart A."/>
            <person name="Sgouros J.G."/>
            <person name="Peat N."/>
            <person name="Hayles J."/>
            <person name="Baker S.G."/>
            <person name="Basham D."/>
            <person name="Bowman S."/>
            <person name="Brooks K."/>
            <person name="Brown D."/>
            <person name="Brown S."/>
            <person name="Chillingworth T."/>
            <person name="Churcher C.M."/>
            <person name="Collins M."/>
            <person name="Connor R."/>
            <person name="Cronin A."/>
            <person name="Davis P."/>
            <person name="Feltwell T."/>
            <person name="Fraser A."/>
            <person name="Gentles S."/>
            <person name="Goble A."/>
            <person name="Hamlin N."/>
            <person name="Harris D.E."/>
            <person name="Hidalgo J."/>
            <person name="Hodgson G."/>
            <person name="Holroyd S."/>
            <person name="Hornsby T."/>
            <person name="Howarth S."/>
            <person name="Huckle E.J."/>
            <person name="Hunt S."/>
            <person name="Jagels K."/>
            <person name="James K.D."/>
            <person name="Jones L."/>
            <person name="Jones M."/>
            <person name="Leather S."/>
            <person name="McDonald S."/>
            <person name="McLean J."/>
            <person name="Mooney P."/>
            <person name="Moule S."/>
            <person name="Mungall K.L."/>
            <person name="Murphy L.D."/>
            <person name="Niblett D."/>
            <person name="Odell C."/>
            <person name="Oliver K."/>
            <person name="O'Neil S."/>
            <person name="Pearson D."/>
            <person name="Quail M.A."/>
            <person name="Rabbinowitsch E."/>
            <person name="Rutherford K.M."/>
            <person name="Rutter S."/>
            <person name="Saunders D."/>
            <person name="Seeger K."/>
            <person name="Sharp S."/>
            <person name="Skelton J."/>
            <person name="Simmonds M.N."/>
            <person name="Squares R."/>
            <person name="Squares S."/>
            <person name="Stevens K."/>
            <person name="Taylor K."/>
            <person name="Taylor R.G."/>
            <person name="Tivey A."/>
            <person name="Walsh S.V."/>
            <person name="Warren T."/>
            <person name="Whitehead S."/>
            <person name="Woodward J.R."/>
            <person name="Volckaert G."/>
            <person name="Aert R."/>
            <person name="Robben J."/>
            <person name="Grymonprez B."/>
            <person name="Weltjens I."/>
            <person name="Vanstreels E."/>
            <person name="Rieger M."/>
            <person name="Schaefer M."/>
            <person name="Mueller-Auer S."/>
            <person name="Gabel C."/>
            <person name="Fuchs M."/>
            <person name="Duesterhoeft A."/>
            <person name="Fritzc C."/>
            <person name="Holzer E."/>
            <person name="Moestl D."/>
            <person name="Hilbert H."/>
            <person name="Borzym K."/>
            <person name="Langer I."/>
            <person name="Beck A."/>
            <person name="Lehrach H."/>
            <person name="Reinhardt R."/>
            <person name="Pohl T.M."/>
            <person name="Eger P."/>
            <person name="Zimmermann W."/>
            <person name="Wedler H."/>
            <person name="Wambutt R."/>
            <person name="Purnelle B."/>
            <person name="Goffeau A."/>
            <person name="Cadieu E."/>
            <person name="Dreano S."/>
            <person name="Gloux S."/>
            <person name="Lelaure V."/>
            <person name="Mottier S."/>
            <person name="Galibert F."/>
            <person name="Aves S.J."/>
            <person name="Xiang Z."/>
            <person name="Hunt C."/>
            <person name="Moore K."/>
            <person name="Hurst S.M."/>
            <person name="Lucas M."/>
            <person name="Rochet M."/>
            <person name="Gaillardin C."/>
            <person name="Tallada V.A."/>
            <person name="Garzon A."/>
            <person name="Thode G."/>
            <person name="Daga R.R."/>
            <person name="Cruzado L."/>
            <person name="Jimenez J."/>
            <person name="Sanchez M."/>
            <person name="del Rey F."/>
            <person name="Benito J."/>
            <person name="Dominguez A."/>
            <person name="Revuelta J.L."/>
            <person name="Moreno S."/>
            <person name="Armstrong J."/>
            <person name="Forsburg S.L."/>
            <person name="Cerutti L."/>
            <person name="Lowe T."/>
            <person name="McCombie W.R."/>
            <person name="Paulsen I."/>
            <person name="Potashkin J."/>
            <person name="Shpakovski G.V."/>
            <person name="Ussery D."/>
            <person name="Barrell B.G."/>
            <person name="Nurse P."/>
        </authorList>
    </citation>
    <scope>NUCLEOTIDE SEQUENCE [LARGE SCALE GENOMIC DNA]</scope>
    <source>
        <strain>972 / ATCC 24843</strain>
    </source>
</reference>
<reference key="2">
    <citation type="journal article" date="2006" name="Nat. Biotechnol.">
        <title>ORFeome cloning and global analysis of protein localization in the fission yeast Schizosaccharomyces pombe.</title>
        <authorList>
            <person name="Matsuyama A."/>
            <person name="Arai R."/>
            <person name="Yashiroda Y."/>
            <person name="Shirai A."/>
            <person name="Kamata A."/>
            <person name="Sekido S."/>
            <person name="Kobayashi Y."/>
            <person name="Hashimoto A."/>
            <person name="Hamamoto M."/>
            <person name="Hiraoka Y."/>
            <person name="Horinouchi S."/>
            <person name="Yoshida M."/>
        </authorList>
    </citation>
    <scope>SUBCELLULAR LOCATION [LARGE SCALE ANALYSIS]</scope>
</reference>
<keyword id="KW-0472">Membrane</keyword>
<keyword id="KW-0496">Mitochondrion</keyword>
<keyword id="KW-0999">Mitochondrion inner membrane</keyword>
<keyword id="KW-1185">Reference proteome</keyword>
<keyword id="KW-0677">Repeat</keyword>
<keyword id="KW-0812">Transmembrane</keyword>
<keyword id="KW-1133">Transmembrane helix</keyword>
<keyword id="KW-0813">Transport</keyword>
<feature type="chain" id="PRO_0000310789" description="Mitochondrial ornithine transporter 1">
    <location>
        <begin position="1"/>
        <end position="297"/>
    </location>
</feature>
<feature type="transmembrane region" description="Helical; Name=1" evidence="2">
    <location>
        <begin position="18"/>
        <end position="38"/>
    </location>
</feature>
<feature type="transmembrane region" description="Helical; Name=2" evidence="2">
    <location>
        <begin position="72"/>
        <end position="91"/>
    </location>
</feature>
<feature type="transmembrane region" description="Helical; Name=1" evidence="2">
    <location>
        <begin position="107"/>
        <end position="127"/>
    </location>
</feature>
<feature type="transmembrane region" description="Helical; Name=4" evidence="2">
    <location>
        <begin position="184"/>
        <end position="204"/>
    </location>
</feature>
<feature type="transmembrane region" description="Helical; Name=5" evidence="2">
    <location>
        <begin position="215"/>
        <end position="235"/>
    </location>
</feature>
<feature type="transmembrane region" description="Helical; Name=6" evidence="2">
    <location>
        <begin position="264"/>
        <end position="285"/>
    </location>
</feature>
<feature type="repeat" description="Solcar 1">
    <location>
        <begin position="15"/>
        <end position="97"/>
    </location>
</feature>
<feature type="repeat" description="Solcar 2">
    <location>
        <begin position="102"/>
        <end position="205"/>
    </location>
</feature>
<feature type="repeat" description="Solcar 3">
    <location>
        <begin position="212"/>
        <end position="292"/>
    </location>
</feature>